<comment type="similarity">
    <text evidence="1">Belongs to the UPF0111 family.</text>
</comment>
<organism>
    <name type="scientific">Pyrococcus horikoshii (strain ATCC 700860 / DSM 12428 / JCM 9974 / NBRC 100139 / OT-3)</name>
    <dbReference type="NCBI Taxonomy" id="70601"/>
    <lineage>
        <taxon>Archaea</taxon>
        <taxon>Methanobacteriati</taxon>
        <taxon>Methanobacteriota</taxon>
        <taxon>Thermococci</taxon>
        <taxon>Thermococcales</taxon>
        <taxon>Thermococcaceae</taxon>
        <taxon>Pyrococcus</taxon>
    </lineage>
</organism>
<proteinExistence type="inferred from homology"/>
<evidence type="ECO:0000305" key="1"/>
<protein>
    <recommendedName>
        <fullName>UPF0111 protein PH0637</fullName>
    </recommendedName>
</protein>
<name>Y637_PYRHO</name>
<gene>
    <name type="ordered locus">PH0637</name>
</gene>
<feature type="chain" id="PRO_0000154915" description="UPF0111 protein PH0637">
    <location>
        <begin position="1"/>
        <end position="226"/>
    </location>
</feature>
<accession>O58371</accession>
<reference key="1">
    <citation type="journal article" date="1998" name="DNA Res.">
        <title>Complete sequence and gene organization of the genome of a hyper-thermophilic archaebacterium, Pyrococcus horikoshii OT3.</title>
        <authorList>
            <person name="Kawarabayasi Y."/>
            <person name="Sawada M."/>
            <person name="Horikawa H."/>
            <person name="Haikawa Y."/>
            <person name="Hino Y."/>
            <person name="Yamamoto S."/>
            <person name="Sekine M."/>
            <person name="Baba S."/>
            <person name="Kosugi H."/>
            <person name="Hosoyama A."/>
            <person name="Nagai Y."/>
            <person name="Sakai M."/>
            <person name="Ogura K."/>
            <person name="Otsuka R."/>
            <person name="Nakazawa H."/>
            <person name="Takamiya M."/>
            <person name="Ohfuku Y."/>
            <person name="Funahashi T."/>
            <person name="Tanaka T."/>
            <person name="Kudoh Y."/>
            <person name="Yamazaki J."/>
            <person name="Kushida N."/>
            <person name="Oguchi A."/>
            <person name="Aoki K."/>
            <person name="Yoshizawa T."/>
            <person name="Nakamura Y."/>
            <person name="Robb F.T."/>
            <person name="Horikoshi K."/>
            <person name="Masuchi Y."/>
            <person name="Shizuya H."/>
            <person name="Kikuchi H."/>
        </authorList>
    </citation>
    <scope>NUCLEOTIDE SEQUENCE [LARGE SCALE GENOMIC DNA]</scope>
    <source>
        <strain>ATCC 700860 / DSM 12428 / JCM 9974 / NBRC 100139 / OT-3</strain>
    </source>
</reference>
<dbReference type="EMBL" id="BA000001">
    <property type="protein sequence ID" value="BAA29728.1"/>
    <property type="molecule type" value="Genomic_DNA"/>
</dbReference>
<dbReference type="PIR" id="F71108">
    <property type="entry name" value="F71108"/>
</dbReference>
<dbReference type="SMR" id="O58371"/>
<dbReference type="STRING" id="70601.gene:9377581"/>
<dbReference type="DNASU" id="1442972"/>
<dbReference type="EnsemblBacteria" id="BAA29728">
    <property type="protein sequence ID" value="BAA29728"/>
    <property type="gene ID" value="BAA29728"/>
</dbReference>
<dbReference type="KEGG" id="pho:PH0637"/>
<dbReference type="eggNOG" id="arCOG02640">
    <property type="taxonomic scope" value="Archaea"/>
</dbReference>
<dbReference type="Proteomes" id="UP000000752">
    <property type="component" value="Chromosome"/>
</dbReference>
<dbReference type="Gene3D" id="1.20.58.220">
    <property type="entry name" value="Phosphate transport system protein phou homolog 2, domain 2"/>
    <property type="match status" value="1"/>
</dbReference>
<dbReference type="InterPro" id="IPR002727">
    <property type="entry name" value="DUF47"/>
</dbReference>
<dbReference type="InterPro" id="IPR038078">
    <property type="entry name" value="PhoU-like_sf"/>
</dbReference>
<dbReference type="InterPro" id="IPR018445">
    <property type="entry name" value="Put_Phosphate_transp_reg"/>
</dbReference>
<dbReference type="NCBIfam" id="TIGR00153">
    <property type="entry name" value="TIGR00153 family protein"/>
    <property type="match status" value="1"/>
</dbReference>
<dbReference type="PANTHER" id="PTHR36536">
    <property type="entry name" value="UPF0111 PROTEIN HI_1603"/>
    <property type="match status" value="1"/>
</dbReference>
<dbReference type="PANTHER" id="PTHR36536:SF3">
    <property type="entry name" value="UPF0111 PROTEIN HI_1603"/>
    <property type="match status" value="1"/>
</dbReference>
<dbReference type="Pfam" id="PF01865">
    <property type="entry name" value="PhoU_div"/>
    <property type="match status" value="1"/>
</dbReference>
<dbReference type="SUPFAM" id="SSF109755">
    <property type="entry name" value="PhoU-like"/>
    <property type="match status" value="1"/>
</dbReference>
<sequence>MIKMQVWKKLFAKSPFKPLIRHAEVVVQTVETLEKALDSWARGDYENMKEYAKKVDDLEDIADKIKSELRDSITSKLLMPVQRTDILEYLHMQDKIADAAEDTAKWLLIKRNLDSIPNDIKDIILKMGKESIKAAKLVYEAIKQLDNVLESGFAEKEIKKEYKIIKQIEEVESKIDGLDSKLMEIVFTSELDWKDGLYILNIARTLSNISDKAKDTAERIRVLMNK</sequence>